<organism>
    <name type="scientific">Homo sapiens</name>
    <name type="common">Human</name>
    <dbReference type="NCBI Taxonomy" id="9606"/>
    <lineage>
        <taxon>Eukaryota</taxon>
        <taxon>Metazoa</taxon>
        <taxon>Chordata</taxon>
        <taxon>Craniata</taxon>
        <taxon>Vertebrata</taxon>
        <taxon>Euteleostomi</taxon>
        <taxon>Mammalia</taxon>
        <taxon>Eutheria</taxon>
        <taxon>Euarchontoglires</taxon>
        <taxon>Primates</taxon>
        <taxon>Haplorrhini</taxon>
        <taxon>Catarrhini</taxon>
        <taxon>Hominidae</taxon>
        <taxon>Homo</taxon>
    </lineage>
</organism>
<keyword id="KW-0025">Alternative splicing</keyword>
<keyword id="KW-0256">Endoplasmic reticulum</keyword>
<keyword id="KW-0444">Lipid biosynthesis</keyword>
<keyword id="KW-0443">Lipid metabolism</keyword>
<keyword id="KW-0472">Membrane</keyword>
<keyword id="KW-0548">Nucleotidyltransferase</keyword>
<keyword id="KW-0594">Phospholipid biosynthesis</keyword>
<keyword id="KW-1208">Phospholipid metabolism</keyword>
<keyword id="KW-0597">Phosphoprotein</keyword>
<keyword id="KW-1267">Proteomics identification</keyword>
<keyword id="KW-1185">Reference proteome</keyword>
<keyword id="KW-0808">Transferase</keyword>
<keyword id="KW-0812">Transmembrane</keyword>
<keyword id="KW-1133">Transmembrane helix</keyword>
<proteinExistence type="evidence at protein level"/>
<dbReference type="EC" id="2.7.7.41" evidence="5"/>
<dbReference type="EMBL" id="Y16521">
    <property type="protein sequence ID" value="CAA76270.1"/>
    <property type="molecule type" value="mRNA"/>
</dbReference>
<dbReference type="EMBL" id="AK315489">
    <property type="protein sequence ID" value="BAG37873.1"/>
    <property type="molecule type" value="mRNA"/>
</dbReference>
<dbReference type="EMBL" id="AL121755">
    <property type="status" value="NOT_ANNOTATED_CDS"/>
    <property type="molecule type" value="Genomic_DNA"/>
</dbReference>
<dbReference type="EMBL" id="AL121924">
    <property type="status" value="NOT_ANNOTATED_CDS"/>
    <property type="molecule type" value="Genomic_DNA"/>
</dbReference>
<dbReference type="EMBL" id="CH471133">
    <property type="protein sequence ID" value="EAX10424.1"/>
    <property type="molecule type" value="Genomic_DNA"/>
</dbReference>
<dbReference type="EMBL" id="CH471133">
    <property type="protein sequence ID" value="EAX10426.1"/>
    <property type="molecule type" value="Genomic_DNA"/>
</dbReference>
<dbReference type="EMBL" id="BC025751">
    <property type="protein sequence ID" value="AAH25751.1"/>
    <property type="molecule type" value="mRNA"/>
</dbReference>
<dbReference type="EMBL" id="AF069532">
    <property type="protein sequence ID" value="AAC78305.1"/>
    <property type="molecule type" value="mRNA"/>
</dbReference>
<dbReference type="CCDS" id="CCDS13088.1">
    <molecule id="O95674-1"/>
</dbReference>
<dbReference type="RefSeq" id="NP_003809.1">
    <molecule id="O95674-1"/>
    <property type="nucleotide sequence ID" value="NM_003818.4"/>
</dbReference>
<dbReference type="BioGRID" id="114295">
    <property type="interactions" value="157"/>
</dbReference>
<dbReference type="FunCoup" id="O95674">
    <property type="interactions" value="2500"/>
</dbReference>
<dbReference type="IntAct" id="O95674">
    <property type="interactions" value="107"/>
</dbReference>
<dbReference type="MINT" id="O95674"/>
<dbReference type="STRING" id="9606.ENSP00000419879"/>
<dbReference type="SwissLipids" id="SLP:000001138"/>
<dbReference type="GlyCosmos" id="O95674">
    <property type="glycosylation" value="1 site, 2 glycans"/>
</dbReference>
<dbReference type="GlyGen" id="O95674">
    <property type="glycosylation" value="3 sites, 2 N-linked glycans (2 sites), 1 O-linked glycan (1 site)"/>
</dbReference>
<dbReference type="iPTMnet" id="O95674"/>
<dbReference type="PhosphoSitePlus" id="O95674"/>
<dbReference type="SwissPalm" id="O95674"/>
<dbReference type="BioMuta" id="CDS2"/>
<dbReference type="jPOST" id="O95674"/>
<dbReference type="MassIVE" id="O95674"/>
<dbReference type="PaxDb" id="9606-ENSP00000419879"/>
<dbReference type="PeptideAtlas" id="O95674"/>
<dbReference type="ProteomicsDB" id="50988">
    <molecule id="O95674-1"/>
</dbReference>
<dbReference type="Pumba" id="O95674"/>
<dbReference type="Antibodypedia" id="8142">
    <property type="antibodies" value="149 antibodies from 23 providers"/>
</dbReference>
<dbReference type="DNASU" id="8760"/>
<dbReference type="Ensembl" id="ENST00000450570.1">
    <molecule id="O95674-2"/>
    <property type="protein sequence ID" value="ENSP00000403205.1"/>
    <property type="gene ID" value="ENSG00000101290.14"/>
</dbReference>
<dbReference type="Ensembl" id="ENST00000460006.6">
    <molecule id="O95674-1"/>
    <property type="protein sequence ID" value="ENSP00000419879.1"/>
    <property type="gene ID" value="ENSG00000101290.14"/>
</dbReference>
<dbReference type="GeneID" id="8760"/>
<dbReference type="KEGG" id="hsa:8760"/>
<dbReference type="MANE-Select" id="ENST00000460006.6">
    <property type="protein sequence ID" value="ENSP00000419879.1"/>
    <property type="RefSeq nucleotide sequence ID" value="NM_003818.4"/>
    <property type="RefSeq protein sequence ID" value="NP_003809.1"/>
</dbReference>
<dbReference type="UCSC" id="uc002wls.4">
    <molecule id="O95674-1"/>
    <property type="organism name" value="human"/>
</dbReference>
<dbReference type="AGR" id="HGNC:1801"/>
<dbReference type="CTD" id="8760"/>
<dbReference type="DisGeNET" id="8760"/>
<dbReference type="GeneCards" id="CDS2"/>
<dbReference type="HGNC" id="HGNC:1801">
    <property type="gene designation" value="CDS2"/>
</dbReference>
<dbReference type="HPA" id="ENSG00000101290">
    <property type="expression patterns" value="Low tissue specificity"/>
</dbReference>
<dbReference type="MIM" id="603549">
    <property type="type" value="gene"/>
</dbReference>
<dbReference type="neXtProt" id="NX_O95674"/>
<dbReference type="OpenTargets" id="ENSG00000101290"/>
<dbReference type="PharmGKB" id="PA26347"/>
<dbReference type="VEuPathDB" id="HostDB:ENSG00000101290"/>
<dbReference type="eggNOG" id="KOG1440">
    <property type="taxonomic scope" value="Eukaryota"/>
</dbReference>
<dbReference type="GeneTree" id="ENSGT00940000158877"/>
<dbReference type="HOGENOM" id="CLU_023471_0_1_1"/>
<dbReference type="InParanoid" id="O95674"/>
<dbReference type="OMA" id="FVIESTM"/>
<dbReference type="OrthoDB" id="10260889at2759"/>
<dbReference type="PAN-GO" id="O95674">
    <property type="GO annotations" value="1 GO annotation based on evolutionary models"/>
</dbReference>
<dbReference type="PhylomeDB" id="O95674"/>
<dbReference type="TreeFam" id="TF313464"/>
<dbReference type="BRENDA" id="2.7.7.41">
    <property type="organism ID" value="2681"/>
</dbReference>
<dbReference type="PathwayCommons" id="O95674"/>
<dbReference type="Reactome" id="R-HSA-1483148">
    <property type="pathway name" value="Synthesis of PG"/>
</dbReference>
<dbReference type="SignaLink" id="O95674"/>
<dbReference type="SIGNOR" id="O95674"/>
<dbReference type="UniPathway" id="UPA00557">
    <property type="reaction ID" value="UER00614"/>
</dbReference>
<dbReference type="BioGRID-ORCS" id="8760">
    <property type="hits" value="184 hits in 1166 CRISPR screens"/>
</dbReference>
<dbReference type="ChiTaRS" id="CDS2">
    <property type="organism name" value="human"/>
</dbReference>
<dbReference type="GeneWiki" id="CDS2"/>
<dbReference type="GenomeRNAi" id="8760"/>
<dbReference type="Pharos" id="O95674">
    <property type="development level" value="Tbio"/>
</dbReference>
<dbReference type="PRO" id="PR:O95674"/>
<dbReference type="Proteomes" id="UP000005640">
    <property type="component" value="Chromosome 20"/>
</dbReference>
<dbReference type="RNAct" id="O95674">
    <property type="molecule type" value="protein"/>
</dbReference>
<dbReference type="Bgee" id="ENSG00000101290">
    <property type="expression patterns" value="Expressed in lateral nuclear group of thalamus and 212 other cell types or tissues"/>
</dbReference>
<dbReference type="GO" id="GO:0005783">
    <property type="term" value="C:endoplasmic reticulum"/>
    <property type="evidence" value="ECO:0000314"/>
    <property type="project" value="UniProtKB"/>
</dbReference>
<dbReference type="GO" id="GO:0005789">
    <property type="term" value="C:endoplasmic reticulum membrane"/>
    <property type="evidence" value="ECO:0000318"/>
    <property type="project" value="GO_Central"/>
</dbReference>
<dbReference type="GO" id="GO:0016020">
    <property type="term" value="C:membrane"/>
    <property type="evidence" value="ECO:0007005"/>
    <property type="project" value="UniProtKB"/>
</dbReference>
<dbReference type="GO" id="GO:0005743">
    <property type="term" value="C:mitochondrial inner membrane"/>
    <property type="evidence" value="ECO:0000304"/>
    <property type="project" value="Reactome"/>
</dbReference>
<dbReference type="GO" id="GO:0004605">
    <property type="term" value="F:phosphatidate cytidylyltransferase activity"/>
    <property type="evidence" value="ECO:0000314"/>
    <property type="project" value="UniProtKB"/>
</dbReference>
<dbReference type="GO" id="GO:0016024">
    <property type="term" value="P:CDP-diacylglycerol biosynthetic process"/>
    <property type="evidence" value="ECO:0000314"/>
    <property type="project" value="UniProtKB"/>
</dbReference>
<dbReference type="GO" id="GO:0140042">
    <property type="term" value="P:lipid droplet formation"/>
    <property type="evidence" value="ECO:0000315"/>
    <property type="project" value="UniProtKB"/>
</dbReference>
<dbReference type="GO" id="GO:0006655">
    <property type="term" value="P:phosphatidylglycerol biosynthetic process"/>
    <property type="evidence" value="ECO:0000304"/>
    <property type="project" value="Reactome"/>
</dbReference>
<dbReference type="InterPro" id="IPR000374">
    <property type="entry name" value="PC_trans"/>
</dbReference>
<dbReference type="InterPro" id="IPR016720">
    <property type="entry name" value="PC_Trfase_euk"/>
</dbReference>
<dbReference type="PANTHER" id="PTHR13773">
    <property type="entry name" value="PHOSPHATIDATE CYTIDYLYLTRANSFERASE"/>
    <property type="match status" value="1"/>
</dbReference>
<dbReference type="PANTHER" id="PTHR13773:SF4">
    <property type="entry name" value="PHOSPHATIDATE CYTIDYLYLTRANSFERASE 2"/>
    <property type="match status" value="1"/>
</dbReference>
<dbReference type="Pfam" id="PF01148">
    <property type="entry name" value="CTP_transf_1"/>
    <property type="match status" value="1"/>
</dbReference>
<dbReference type="PIRSF" id="PIRSF018269">
    <property type="entry name" value="PC_trans_euk"/>
    <property type="match status" value="1"/>
</dbReference>
<dbReference type="PROSITE" id="PS01315">
    <property type="entry name" value="CDS"/>
    <property type="match status" value="1"/>
</dbReference>
<evidence type="ECO:0000250" key="1">
    <source>
        <dbReference type="UniProtKB" id="Q91XU8"/>
    </source>
</evidence>
<evidence type="ECO:0000250" key="2">
    <source>
        <dbReference type="UniProtKB" id="Q99L43"/>
    </source>
</evidence>
<evidence type="ECO:0000255" key="3"/>
<evidence type="ECO:0000256" key="4">
    <source>
        <dbReference type="SAM" id="MobiDB-lite"/>
    </source>
</evidence>
<evidence type="ECO:0000269" key="5">
    <source>
    </source>
</evidence>
<evidence type="ECO:0000269" key="6">
    <source>
    </source>
</evidence>
<evidence type="ECO:0000269" key="7">
    <source>
    </source>
</evidence>
<evidence type="ECO:0000269" key="8">
    <source>
    </source>
</evidence>
<evidence type="ECO:0000305" key="9"/>
<evidence type="ECO:0000305" key="10">
    <source>
    </source>
</evidence>
<evidence type="ECO:0000312" key="11">
    <source>
        <dbReference type="HGNC" id="HGNC:1801"/>
    </source>
</evidence>
<evidence type="ECO:0007744" key="12">
    <source>
    </source>
</evidence>
<evidence type="ECO:0007744" key="13">
    <source>
    </source>
</evidence>
<evidence type="ECO:0007744" key="14">
    <source>
    </source>
</evidence>
<evidence type="ECO:0007744" key="15">
    <source>
    </source>
</evidence>
<feature type="chain" id="PRO_0000090716" description="Phosphatidate cytidylyltransferase 2">
    <location>
        <begin position="1"/>
        <end position="445"/>
    </location>
</feature>
<feature type="transmembrane region" description="Helical" evidence="3">
    <location>
        <begin position="79"/>
        <end position="99"/>
    </location>
</feature>
<feature type="transmembrane region" description="Helical" evidence="3">
    <location>
        <begin position="132"/>
        <end position="152"/>
    </location>
</feature>
<feature type="transmembrane region" description="Helical" evidence="3">
    <location>
        <begin position="166"/>
        <end position="186"/>
    </location>
</feature>
<feature type="transmembrane region" description="Helical" evidence="3">
    <location>
        <begin position="213"/>
        <end position="233"/>
    </location>
</feature>
<feature type="transmembrane region" description="Helical" evidence="3">
    <location>
        <begin position="262"/>
        <end position="282"/>
    </location>
</feature>
<feature type="transmembrane region" description="Helical" evidence="3">
    <location>
        <begin position="340"/>
        <end position="360"/>
    </location>
</feature>
<feature type="region of interest" description="Disordered" evidence="4">
    <location>
        <begin position="1"/>
        <end position="49"/>
    </location>
</feature>
<feature type="compositionally biased region" description="Basic and acidic residues" evidence="4">
    <location>
        <begin position="1"/>
        <end position="39"/>
    </location>
</feature>
<feature type="modified residue" description="Phosphoserine" evidence="13 14">
    <location>
        <position position="21"/>
    </location>
</feature>
<feature type="modified residue" description="Phosphothreonine" evidence="15">
    <location>
        <position position="31"/>
    </location>
</feature>
<feature type="modified residue" description="Phosphoserine" evidence="13 15">
    <location>
        <position position="33"/>
    </location>
</feature>
<feature type="modified residue" description="Phosphoserine" evidence="13">
    <location>
        <position position="35"/>
    </location>
</feature>
<feature type="modified residue" description="Phosphoserine" evidence="12">
    <location>
        <position position="37"/>
    </location>
</feature>
<feature type="modified residue" description="Phosphothreonine" evidence="2">
    <location>
        <position position="51"/>
    </location>
</feature>
<feature type="splice variant" id="VSP_015477" description="In isoform 2." evidence="9">
    <location>
        <begin position="1"/>
        <end position="55"/>
    </location>
</feature>
<feature type="splice variant" id="VSP_015480" description="In isoform 2." evidence="9">
    <original>NRALSNLSS</original>
    <variation>MSRLRHPRT</variation>
    <location>
        <begin position="56"/>
        <end position="64"/>
    </location>
</feature>
<feature type="splice variant" id="VSP_015482" description="In isoform 2." evidence="9">
    <location>
        <begin position="306"/>
        <end position="445"/>
    </location>
</feature>
<sequence length="445" mass="51418">MTELRQRVAHEPVAPPEDKESESEAKVDGETASDSESRAESAPLPVSADDTPEVLNRALSNLSSRWKNWWVRGILTLAMIAFFFIIIYLGPMVLMIIVMCVQIKCFHEIITIGYNVYHSYDLPWFRTLSWYFLLCVNYFFYGETVTDYFFTLVQREEPLRILSKYHRFISFTLYLIGFCMFVLSLVKKHYRLQFYMFGWTHVTLLIVVTQSHLVIHNLFEGMIWFIVPISCVICNDIMAYMFGFFFGRTPLIKLSPKKTWEGFIGGFFATVVFGLLLSYVMSGYRCFVCPVEYNNDTNSFTVDCEPSDLFRLQEYNIPGVIQSVIGWKTVRMYPFQIHSIALSTFASLIGPFGGFFASGFKRAFKIKDFANTIPGHGGIMDRFDCQYLMATFVNVYIASFIRGPNPSKLIQQFLTLRPDQQLHIFNTLRSHLIDKGMLTSTTEDE</sequence>
<reference key="1">
    <citation type="journal article" date="1999" name="Genomics">
        <title>Identification and characterization of CDS2, a mammalian homolog of the Drosophila CDP-diacylglycerol synthase gene.</title>
        <authorList>
            <person name="Volta M."/>
            <person name="Bulfone A."/>
            <person name="Gattuso C."/>
            <person name="Rossi E."/>
            <person name="Mariani M."/>
            <person name="Consalez G.G."/>
            <person name="Zuffardi O."/>
            <person name="Ballabio A."/>
            <person name="Banfi S."/>
            <person name="Franco B."/>
        </authorList>
    </citation>
    <scope>NUCLEOTIDE SEQUENCE [MRNA] (ISOFORM 1)</scope>
    <scope>TISSUE SPECIFICITY</scope>
    <scope>DEVELOPMENTAL STAGE</scope>
</reference>
<reference key="2">
    <citation type="journal article" date="2004" name="Nat. Genet.">
        <title>Complete sequencing and characterization of 21,243 full-length human cDNAs.</title>
        <authorList>
            <person name="Ota T."/>
            <person name="Suzuki Y."/>
            <person name="Nishikawa T."/>
            <person name="Otsuki T."/>
            <person name="Sugiyama T."/>
            <person name="Irie R."/>
            <person name="Wakamatsu A."/>
            <person name="Hayashi K."/>
            <person name="Sato H."/>
            <person name="Nagai K."/>
            <person name="Kimura K."/>
            <person name="Makita H."/>
            <person name="Sekine M."/>
            <person name="Obayashi M."/>
            <person name="Nishi T."/>
            <person name="Shibahara T."/>
            <person name="Tanaka T."/>
            <person name="Ishii S."/>
            <person name="Yamamoto J."/>
            <person name="Saito K."/>
            <person name="Kawai Y."/>
            <person name="Isono Y."/>
            <person name="Nakamura Y."/>
            <person name="Nagahari K."/>
            <person name="Murakami K."/>
            <person name="Yasuda T."/>
            <person name="Iwayanagi T."/>
            <person name="Wagatsuma M."/>
            <person name="Shiratori A."/>
            <person name="Sudo H."/>
            <person name="Hosoiri T."/>
            <person name="Kaku Y."/>
            <person name="Kodaira H."/>
            <person name="Kondo H."/>
            <person name="Sugawara M."/>
            <person name="Takahashi M."/>
            <person name="Kanda K."/>
            <person name="Yokoi T."/>
            <person name="Furuya T."/>
            <person name="Kikkawa E."/>
            <person name="Omura Y."/>
            <person name="Abe K."/>
            <person name="Kamihara K."/>
            <person name="Katsuta N."/>
            <person name="Sato K."/>
            <person name="Tanikawa M."/>
            <person name="Yamazaki M."/>
            <person name="Ninomiya K."/>
            <person name="Ishibashi T."/>
            <person name="Yamashita H."/>
            <person name="Murakawa K."/>
            <person name="Fujimori K."/>
            <person name="Tanai H."/>
            <person name="Kimata M."/>
            <person name="Watanabe M."/>
            <person name="Hiraoka S."/>
            <person name="Chiba Y."/>
            <person name="Ishida S."/>
            <person name="Ono Y."/>
            <person name="Takiguchi S."/>
            <person name="Watanabe S."/>
            <person name="Yosida M."/>
            <person name="Hotuta T."/>
            <person name="Kusano J."/>
            <person name="Kanehori K."/>
            <person name="Takahashi-Fujii A."/>
            <person name="Hara H."/>
            <person name="Tanase T.-O."/>
            <person name="Nomura Y."/>
            <person name="Togiya S."/>
            <person name="Komai F."/>
            <person name="Hara R."/>
            <person name="Takeuchi K."/>
            <person name="Arita M."/>
            <person name="Imose N."/>
            <person name="Musashino K."/>
            <person name="Yuuki H."/>
            <person name="Oshima A."/>
            <person name="Sasaki N."/>
            <person name="Aotsuka S."/>
            <person name="Yoshikawa Y."/>
            <person name="Matsunawa H."/>
            <person name="Ichihara T."/>
            <person name="Shiohata N."/>
            <person name="Sano S."/>
            <person name="Moriya S."/>
            <person name="Momiyama H."/>
            <person name="Satoh N."/>
            <person name="Takami S."/>
            <person name="Terashima Y."/>
            <person name="Suzuki O."/>
            <person name="Nakagawa S."/>
            <person name="Senoh A."/>
            <person name="Mizoguchi H."/>
            <person name="Goto Y."/>
            <person name="Shimizu F."/>
            <person name="Wakebe H."/>
            <person name="Hishigaki H."/>
            <person name="Watanabe T."/>
            <person name="Sugiyama A."/>
            <person name="Takemoto M."/>
            <person name="Kawakami B."/>
            <person name="Yamazaki M."/>
            <person name="Watanabe K."/>
            <person name="Kumagai A."/>
            <person name="Itakura S."/>
            <person name="Fukuzumi Y."/>
            <person name="Fujimori Y."/>
            <person name="Komiyama M."/>
            <person name="Tashiro H."/>
            <person name="Tanigami A."/>
            <person name="Fujiwara T."/>
            <person name="Ono T."/>
            <person name="Yamada K."/>
            <person name="Fujii Y."/>
            <person name="Ozaki K."/>
            <person name="Hirao M."/>
            <person name="Ohmori Y."/>
            <person name="Kawabata A."/>
            <person name="Hikiji T."/>
            <person name="Kobatake N."/>
            <person name="Inagaki H."/>
            <person name="Ikema Y."/>
            <person name="Okamoto S."/>
            <person name="Okitani R."/>
            <person name="Kawakami T."/>
            <person name="Noguchi S."/>
            <person name="Itoh T."/>
            <person name="Shigeta K."/>
            <person name="Senba T."/>
            <person name="Matsumura K."/>
            <person name="Nakajima Y."/>
            <person name="Mizuno T."/>
            <person name="Morinaga M."/>
            <person name="Sasaki M."/>
            <person name="Togashi T."/>
            <person name="Oyama M."/>
            <person name="Hata H."/>
            <person name="Watanabe M."/>
            <person name="Komatsu T."/>
            <person name="Mizushima-Sugano J."/>
            <person name="Satoh T."/>
            <person name="Shirai Y."/>
            <person name="Takahashi Y."/>
            <person name="Nakagawa K."/>
            <person name="Okumura K."/>
            <person name="Nagase T."/>
            <person name="Nomura N."/>
            <person name="Kikuchi H."/>
            <person name="Masuho Y."/>
            <person name="Yamashita R."/>
            <person name="Nakai K."/>
            <person name="Yada T."/>
            <person name="Nakamura Y."/>
            <person name="Ohara O."/>
            <person name="Isogai T."/>
            <person name="Sugano S."/>
        </authorList>
    </citation>
    <scope>NUCLEOTIDE SEQUENCE [LARGE SCALE MRNA] (ISOFORM 1)</scope>
</reference>
<reference key="3">
    <citation type="journal article" date="2001" name="Nature">
        <title>The DNA sequence and comparative analysis of human chromosome 20.</title>
        <authorList>
            <person name="Deloukas P."/>
            <person name="Matthews L.H."/>
            <person name="Ashurst J.L."/>
            <person name="Burton J."/>
            <person name="Gilbert J.G.R."/>
            <person name="Jones M."/>
            <person name="Stavrides G."/>
            <person name="Almeida J.P."/>
            <person name="Babbage A.K."/>
            <person name="Bagguley C.L."/>
            <person name="Bailey J."/>
            <person name="Barlow K.F."/>
            <person name="Bates K.N."/>
            <person name="Beard L.M."/>
            <person name="Beare D.M."/>
            <person name="Beasley O.P."/>
            <person name="Bird C.P."/>
            <person name="Blakey S.E."/>
            <person name="Bridgeman A.M."/>
            <person name="Brown A.J."/>
            <person name="Buck D."/>
            <person name="Burrill W.D."/>
            <person name="Butler A.P."/>
            <person name="Carder C."/>
            <person name="Carter N.P."/>
            <person name="Chapman J.C."/>
            <person name="Clamp M."/>
            <person name="Clark G."/>
            <person name="Clark L.N."/>
            <person name="Clark S.Y."/>
            <person name="Clee C.M."/>
            <person name="Clegg S."/>
            <person name="Cobley V.E."/>
            <person name="Collier R.E."/>
            <person name="Connor R.E."/>
            <person name="Corby N.R."/>
            <person name="Coulson A."/>
            <person name="Coville G.J."/>
            <person name="Deadman R."/>
            <person name="Dhami P.D."/>
            <person name="Dunn M."/>
            <person name="Ellington A.G."/>
            <person name="Frankland J.A."/>
            <person name="Fraser A."/>
            <person name="French L."/>
            <person name="Garner P."/>
            <person name="Grafham D.V."/>
            <person name="Griffiths C."/>
            <person name="Griffiths M.N.D."/>
            <person name="Gwilliam R."/>
            <person name="Hall R.E."/>
            <person name="Hammond S."/>
            <person name="Harley J.L."/>
            <person name="Heath P.D."/>
            <person name="Ho S."/>
            <person name="Holden J.L."/>
            <person name="Howden P.J."/>
            <person name="Huckle E."/>
            <person name="Hunt A.R."/>
            <person name="Hunt S.E."/>
            <person name="Jekosch K."/>
            <person name="Johnson C.M."/>
            <person name="Johnson D."/>
            <person name="Kay M.P."/>
            <person name="Kimberley A.M."/>
            <person name="King A."/>
            <person name="Knights A."/>
            <person name="Laird G.K."/>
            <person name="Lawlor S."/>
            <person name="Lehvaeslaiho M.H."/>
            <person name="Leversha M.A."/>
            <person name="Lloyd C."/>
            <person name="Lloyd D.M."/>
            <person name="Lovell J.D."/>
            <person name="Marsh V.L."/>
            <person name="Martin S.L."/>
            <person name="McConnachie L.J."/>
            <person name="McLay K."/>
            <person name="McMurray A.A."/>
            <person name="Milne S.A."/>
            <person name="Mistry D."/>
            <person name="Moore M.J.F."/>
            <person name="Mullikin J.C."/>
            <person name="Nickerson T."/>
            <person name="Oliver K."/>
            <person name="Parker A."/>
            <person name="Patel R."/>
            <person name="Pearce T.A.V."/>
            <person name="Peck A.I."/>
            <person name="Phillimore B.J.C.T."/>
            <person name="Prathalingam S.R."/>
            <person name="Plumb R.W."/>
            <person name="Ramsay H."/>
            <person name="Rice C.M."/>
            <person name="Ross M.T."/>
            <person name="Scott C.E."/>
            <person name="Sehra H.K."/>
            <person name="Shownkeen R."/>
            <person name="Sims S."/>
            <person name="Skuce C.D."/>
            <person name="Smith M.L."/>
            <person name="Soderlund C."/>
            <person name="Steward C.A."/>
            <person name="Sulston J.E."/>
            <person name="Swann R.M."/>
            <person name="Sycamore N."/>
            <person name="Taylor R."/>
            <person name="Tee L."/>
            <person name="Thomas D.W."/>
            <person name="Thorpe A."/>
            <person name="Tracey A."/>
            <person name="Tromans A.C."/>
            <person name="Vaudin M."/>
            <person name="Wall M."/>
            <person name="Wallis J.M."/>
            <person name="Whitehead S.L."/>
            <person name="Whittaker P."/>
            <person name="Willey D.L."/>
            <person name="Williams L."/>
            <person name="Williams S.A."/>
            <person name="Wilming L."/>
            <person name="Wray P.W."/>
            <person name="Hubbard T."/>
            <person name="Durbin R.M."/>
            <person name="Bentley D.R."/>
            <person name="Beck S."/>
            <person name="Rogers J."/>
        </authorList>
    </citation>
    <scope>NUCLEOTIDE SEQUENCE [LARGE SCALE GENOMIC DNA]</scope>
</reference>
<reference key="4">
    <citation type="submission" date="2005-09" db="EMBL/GenBank/DDBJ databases">
        <authorList>
            <person name="Mural R.J."/>
            <person name="Istrail S."/>
            <person name="Sutton G.G."/>
            <person name="Florea L."/>
            <person name="Halpern A.L."/>
            <person name="Mobarry C.M."/>
            <person name="Lippert R."/>
            <person name="Walenz B."/>
            <person name="Shatkay H."/>
            <person name="Dew I."/>
            <person name="Miller J.R."/>
            <person name="Flanigan M.J."/>
            <person name="Edwards N.J."/>
            <person name="Bolanos R."/>
            <person name="Fasulo D."/>
            <person name="Halldorsson B.V."/>
            <person name="Hannenhalli S."/>
            <person name="Turner R."/>
            <person name="Yooseph S."/>
            <person name="Lu F."/>
            <person name="Nusskern D.R."/>
            <person name="Shue B.C."/>
            <person name="Zheng X.H."/>
            <person name="Zhong F."/>
            <person name="Delcher A.L."/>
            <person name="Huson D.H."/>
            <person name="Kravitz S.A."/>
            <person name="Mouchard L."/>
            <person name="Reinert K."/>
            <person name="Remington K.A."/>
            <person name="Clark A.G."/>
            <person name="Waterman M.S."/>
            <person name="Eichler E.E."/>
            <person name="Adams M.D."/>
            <person name="Hunkapiller M.W."/>
            <person name="Myers E.W."/>
            <person name="Venter J.C."/>
        </authorList>
    </citation>
    <scope>NUCLEOTIDE SEQUENCE [LARGE SCALE GENOMIC DNA]</scope>
</reference>
<reference key="5">
    <citation type="journal article" date="2004" name="Genome Res.">
        <title>The status, quality, and expansion of the NIH full-length cDNA project: the Mammalian Gene Collection (MGC).</title>
        <authorList>
            <consortium name="The MGC Project Team"/>
        </authorList>
    </citation>
    <scope>NUCLEOTIDE SEQUENCE [LARGE SCALE MRNA] (ISOFORM 1)</scope>
    <source>
        <tissue>Brain</tissue>
    </source>
</reference>
<reference key="6">
    <citation type="journal article" date="1998" name="Genomics">
        <title>Isolation and chromosomal localization of two human CDP-diacylglycerol synthase (CDS) genes.</title>
        <authorList>
            <person name="Halford S."/>
            <person name="Dulai K.S."/>
            <person name="Daw S.C.M."/>
            <person name="Fitzgibbon J."/>
            <person name="Hunt D.M."/>
        </authorList>
    </citation>
    <scope>NUCLEOTIDE SEQUENCE [MRNA] OF 25-445 (ISOFORM 1)</scope>
    <source>
        <tissue>Retina</tissue>
    </source>
</reference>
<reference key="7">
    <citation type="journal article" date="2006" name="Cell">
        <title>Global, in vivo, and site-specific phosphorylation dynamics in signaling networks.</title>
        <authorList>
            <person name="Olsen J.V."/>
            <person name="Blagoev B."/>
            <person name="Gnad F."/>
            <person name="Macek B."/>
            <person name="Kumar C."/>
            <person name="Mortensen P."/>
            <person name="Mann M."/>
        </authorList>
    </citation>
    <scope>IDENTIFICATION BY MASS SPECTROMETRY [LARGE SCALE ANALYSIS]</scope>
    <source>
        <tissue>Cervix carcinoma</tissue>
    </source>
</reference>
<reference key="8">
    <citation type="journal article" date="2008" name="J. Proteome Res.">
        <title>Phosphoproteome of resting human platelets.</title>
        <authorList>
            <person name="Zahedi R.P."/>
            <person name="Lewandrowski U."/>
            <person name="Wiesner J."/>
            <person name="Wortelkamp S."/>
            <person name="Moebius J."/>
            <person name="Schuetz C."/>
            <person name="Walter U."/>
            <person name="Gambaryan S."/>
            <person name="Sickmann A."/>
        </authorList>
    </citation>
    <scope>IDENTIFICATION BY MASS SPECTROMETRY [LARGE SCALE ANALYSIS]</scope>
    <source>
        <tissue>Platelet</tissue>
    </source>
</reference>
<reference key="9">
    <citation type="journal article" date="2008" name="Mol. Cell">
        <title>Kinase-selective enrichment enables quantitative phosphoproteomics of the kinome across the cell cycle.</title>
        <authorList>
            <person name="Daub H."/>
            <person name="Olsen J.V."/>
            <person name="Bairlein M."/>
            <person name="Gnad F."/>
            <person name="Oppermann F.S."/>
            <person name="Korner R."/>
            <person name="Greff Z."/>
            <person name="Keri G."/>
            <person name="Stemmann O."/>
            <person name="Mann M."/>
        </authorList>
    </citation>
    <scope>IDENTIFICATION BY MASS SPECTROMETRY [LARGE SCALE ANALYSIS]</scope>
    <source>
        <tissue>Cervix carcinoma</tissue>
    </source>
</reference>
<reference key="10">
    <citation type="journal article" date="2008" name="Proc. Natl. Acad. Sci. U.S.A.">
        <title>A quantitative atlas of mitotic phosphorylation.</title>
        <authorList>
            <person name="Dephoure N."/>
            <person name="Zhou C."/>
            <person name="Villen J."/>
            <person name="Beausoleil S.A."/>
            <person name="Bakalarski C.E."/>
            <person name="Elledge S.J."/>
            <person name="Gygi S.P."/>
        </authorList>
    </citation>
    <scope>IDENTIFICATION BY MASS SPECTROMETRY [LARGE SCALE ANALYSIS]</scope>
    <source>
        <tissue>Cervix carcinoma</tissue>
    </source>
</reference>
<reference key="11">
    <citation type="journal article" date="2008" name="Proteomics">
        <title>Large-scale phosphoproteome analysis of human liver tissue by enrichment and fractionation of phosphopeptides with strong anion exchange chromatography.</title>
        <authorList>
            <person name="Han G."/>
            <person name="Ye M."/>
            <person name="Zhou H."/>
            <person name="Jiang X."/>
            <person name="Feng S."/>
            <person name="Jiang X."/>
            <person name="Tian R."/>
            <person name="Wan D."/>
            <person name="Zou H."/>
            <person name="Gu J."/>
        </authorList>
    </citation>
    <scope>IDENTIFICATION BY MASS SPECTROMETRY [LARGE SCALE ANALYSIS]</scope>
    <source>
        <tissue>Liver</tissue>
    </source>
</reference>
<reference key="12">
    <citation type="journal article" date="2009" name="Sci. Signal.">
        <title>Quantitative phosphoproteomic analysis of T cell receptor signaling reveals system-wide modulation of protein-protein interactions.</title>
        <authorList>
            <person name="Mayya V."/>
            <person name="Lundgren D.H."/>
            <person name="Hwang S.-I."/>
            <person name="Rezaul K."/>
            <person name="Wu L."/>
            <person name="Eng J.K."/>
            <person name="Rodionov V."/>
            <person name="Han D.K."/>
        </authorList>
    </citation>
    <scope>PHOSPHORYLATION [LARGE SCALE ANALYSIS] AT SER-37</scope>
    <scope>IDENTIFICATION BY MASS SPECTROMETRY [LARGE SCALE ANALYSIS]</scope>
    <source>
        <tissue>Leukemic T-cell</tissue>
    </source>
</reference>
<reference key="13">
    <citation type="journal article" date="2010" name="Sci. Signal.">
        <title>Quantitative phosphoproteomics reveals widespread full phosphorylation site occupancy during mitosis.</title>
        <authorList>
            <person name="Olsen J.V."/>
            <person name="Vermeulen M."/>
            <person name="Santamaria A."/>
            <person name="Kumar C."/>
            <person name="Miller M.L."/>
            <person name="Jensen L.J."/>
            <person name="Gnad F."/>
            <person name="Cox J."/>
            <person name="Jensen T.S."/>
            <person name="Nigg E.A."/>
            <person name="Brunak S."/>
            <person name="Mann M."/>
        </authorList>
    </citation>
    <scope>IDENTIFICATION BY MASS SPECTROMETRY [LARGE SCALE ANALYSIS]</scope>
    <source>
        <tissue>Cervix carcinoma</tissue>
    </source>
</reference>
<reference key="14">
    <citation type="journal article" date="2011" name="Sci. Signal.">
        <title>System-wide temporal characterization of the proteome and phosphoproteome of human embryonic stem cell differentiation.</title>
        <authorList>
            <person name="Rigbolt K.T."/>
            <person name="Prokhorova T.A."/>
            <person name="Akimov V."/>
            <person name="Henningsen J."/>
            <person name="Johansen P.T."/>
            <person name="Kratchmarova I."/>
            <person name="Kassem M."/>
            <person name="Mann M."/>
            <person name="Olsen J.V."/>
            <person name="Blagoev B."/>
        </authorList>
    </citation>
    <scope>PHOSPHORYLATION [LARGE SCALE ANALYSIS] AT SER-21; SER-33 AND SER-35</scope>
    <scope>IDENTIFICATION BY MASS SPECTROMETRY [LARGE SCALE ANALYSIS]</scope>
</reference>
<reference key="15">
    <citation type="journal article" date="2013" name="J. Proteome Res.">
        <title>Toward a comprehensive characterization of a human cancer cell phosphoproteome.</title>
        <authorList>
            <person name="Zhou H."/>
            <person name="Di Palma S."/>
            <person name="Preisinger C."/>
            <person name="Peng M."/>
            <person name="Polat A.N."/>
            <person name="Heck A.J."/>
            <person name="Mohammed S."/>
        </authorList>
    </citation>
    <scope>PHOSPHORYLATION [LARGE SCALE ANALYSIS] AT SER-21</scope>
    <scope>IDENTIFICATION BY MASS SPECTROMETRY [LARGE SCALE ANALYSIS]</scope>
    <source>
        <tissue>Cervix carcinoma</tissue>
        <tissue>Erythroleukemia</tissue>
    </source>
</reference>
<reference key="16">
    <citation type="journal article" date="2014" name="J. Proteomics">
        <title>An enzyme assisted RP-RPLC approach for in-depth analysis of human liver phosphoproteome.</title>
        <authorList>
            <person name="Bian Y."/>
            <person name="Song C."/>
            <person name="Cheng K."/>
            <person name="Dong M."/>
            <person name="Wang F."/>
            <person name="Huang J."/>
            <person name="Sun D."/>
            <person name="Wang L."/>
            <person name="Ye M."/>
            <person name="Zou H."/>
        </authorList>
    </citation>
    <scope>PHOSPHORYLATION [LARGE SCALE ANALYSIS] AT THR-31 AND SER-33</scope>
    <scope>IDENTIFICATION BY MASS SPECTROMETRY [LARGE SCALE ANALYSIS]</scope>
    <source>
        <tissue>Liver</tissue>
    </source>
</reference>
<reference key="17">
    <citation type="journal article" date="2014" name="Biochemistry">
        <title>Distinct properties of the two isoforms of CDP-diacylglycerol synthase.</title>
        <authorList>
            <person name="D'Souza K."/>
            <person name="Kim Y.J."/>
            <person name="Balla T."/>
            <person name="Epand R.M."/>
        </authorList>
    </citation>
    <scope>FUNCTION</scope>
    <scope>CATALYTIC ACTIVITY</scope>
    <scope>SUBCELLULAR LOCATION</scope>
    <scope>BIOPHYSICOCHEMICAL PROPERTIES</scope>
    <scope>ACTIVITY REGULATION</scope>
</reference>
<reference key="18">
    <citation type="journal article" date="2016" name="J. Lipid Res.">
        <title>CDP-diacylglycerol synthases regulate the growth of lipid droplets and adipocyte development.</title>
        <authorList>
            <person name="Qi Y."/>
            <person name="Kapterian T.S."/>
            <person name="Du X."/>
            <person name="Ma Q."/>
            <person name="Fei W."/>
            <person name="Zhang Y."/>
            <person name="Huang X."/>
            <person name="Dawes I.W."/>
            <person name="Yang H."/>
        </authorList>
    </citation>
    <scope>FUNCTION</scope>
    <scope>SUBCELLULAR LOCATION</scope>
</reference>
<reference key="19">
    <citation type="journal article" date="2019" name="J. Biol. Chem.">
        <title>CDP-DAG synthase 1 and 2 regulate lipid droplet growth through distinct mechanisms.</title>
        <authorList>
            <person name="Xu Y."/>
            <person name="Mak H.Y."/>
            <person name="Lukmantara I."/>
            <person name="Li Y.E."/>
            <person name="Hoehn K.L."/>
            <person name="Huang X."/>
            <person name="Du X."/>
            <person name="Yang H."/>
        </authorList>
    </citation>
    <scope>FUNCTION</scope>
    <scope>SUBCELLULAR LOCATION</scope>
</reference>
<comment type="function">
    <text evidence="5 6 7">Catalyzes the conversion of phosphatidic acid (PA) to CDP-diacylglycerol (CDP-DAG), an essential intermediate in the synthesis of phosphatidylglycerol, cardiolipin and phosphatidylinositol (PubMed:25375833). Exhibits specificity for the nature of the acyl chains at the sn-1 and sn-2 positions in the substrate, PA and the preferred acyl chain composition is 1-stearoyl-2-arachidonoyl-sn-phosphatidic acid (PubMed:25375833). Plays an important role in regulating the growth and maturation of lipid droplets which are storage organelles at the center of lipid and energy homeostasis (PubMed:26946540, PubMed:31548309).</text>
</comment>
<comment type="catalytic activity">
    <reaction evidence="5">
        <text>a 1,2-diacyl-sn-glycero-3-phosphate + CTP + H(+) = a CDP-1,2-diacyl-sn-glycerol + diphosphate</text>
        <dbReference type="Rhea" id="RHEA:16229"/>
        <dbReference type="ChEBI" id="CHEBI:15378"/>
        <dbReference type="ChEBI" id="CHEBI:33019"/>
        <dbReference type="ChEBI" id="CHEBI:37563"/>
        <dbReference type="ChEBI" id="CHEBI:58332"/>
        <dbReference type="ChEBI" id="CHEBI:58608"/>
        <dbReference type="EC" id="2.7.7.41"/>
    </reaction>
    <physiologicalReaction direction="left-to-right" evidence="10">
        <dbReference type="Rhea" id="RHEA:16230"/>
    </physiologicalReaction>
</comment>
<comment type="catalytic activity">
    <reaction evidence="5">
        <text>1-octadecanoyl-2-(5Z,8Z,11Z,14Z-eicosatetraenoyl)-sn-glycero-3-phosphate + CTP + H(+) = 1-octadecanoyl-2-(5Z,8Z,11Z,14Z-eicosatetraenoyl)-sn-glycero-3-cytidine-5'-diphosphate + diphosphate</text>
        <dbReference type="Rhea" id="RHEA:45648"/>
        <dbReference type="ChEBI" id="CHEBI:15378"/>
        <dbReference type="ChEBI" id="CHEBI:33019"/>
        <dbReference type="ChEBI" id="CHEBI:37563"/>
        <dbReference type="ChEBI" id="CHEBI:77091"/>
        <dbReference type="ChEBI" id="CHEBI:85349"/>
    </reaction>
    <physiologicalReaction direction="left-to-right" evidence="10">
        <dbReference type="Rhea" id="RHEA:45649"/>
    </physiologicalReaction>
</comment>
<comment type="catalytic activity">
    <reaction evidence="5">
        <text>1-octadecanoyl-2-(9Z,12Z-octadecadienoyl)-sn-glycero-3-phosphate + CTP + H(+) = 1-octadecanoyl-2-(9Z,12Z-octadecadienoyl)-sn-glycero-3-cytidine-5'-diphosphate + diphosphate</text>
        <dbReference type="Rhea" id="RHEA:45660"/>
        <dbReference type="ChEBI" id="CHEBI:15378"/>
        <dbReference type="ChEBI" id="CHEBI:33019"/>
        <dbReference type="ChEBI" id="CHEBI:37563"/>
        <dbReference type="ChEBI" id="CHEBI:77098"/>
        <dbReference type="ChEBI" id="CHEBI:85352"/>
    </reaction>
    <physiologicalReaction direction="left-to-right" evidence="10">
        <dbReference type="Rhea" id="RHEA:45661"/>
    </physiologicalReaction>
</comment>
<comment type="catalytic activity">
    <reaction evidence="5">
        <text>1-hexadecanoyl-2-(5Z,8Z,11Z,14Z-eicosatetraenoyl)-sn-glycero-3-phosphate + CTP + H(+) = 1-hexadecanoyl-2-(5Z,8Z,11Z,14Z-eicosatetraenoyl)-sn-glycero-3-cytidine-5'-diphosphate + diphosphate</text>
        <dbReference type="Rhea" id="RHEA:45652"/>
        <dbReference type="ChEBI" id="CHEBI:15378"/>
        <dbReference type="ChEBI" id="CHEBI:33019"/>
        <dbReference type="ChEBI" id="CHEBI:37563"/>
        <dbReference type="ChEBI" id="CHEBI:72864"/>
        <dbReference type="ChEBI" id="CHEBI:85350"/>
    </reaction>
    <physiologicalReaction direction="left-to-right" evidence="10">
        <dbReference type="Rhea" id="RHEA:45653"/>
    </physiologicalReaction>
</comment>
<comment type="catalytic activity">
    <reaction evidence="5">
        <text>1,2-di-(5Z,8Z,11Z,14Z)-eicosatetraenoyl-sn-glycero-3-phosphate + CTP + H(+) = 1,2-di-(5Z,8Z,11Z,14Z-eicosatetraenoyl)-sn-glycero-3-cytidine-5'-diphosphate + diphosphate</text>
        <dbReference type="Rhea" id="RHEA:45656"/>
        <dbReference type="ChEBI" id="CHEBI:15378"/>
        <dbReference type="ChEBI" id="CHEBI:33019"/>
        <dbReference type="ChEBI" id="CHEBI:37563"/>
        <dbReference type="ChEBI" id="CHEBI:77126"/>
        <dbReference type="ChEBI" id="CHEBI:85351"/>
    </reaction>
    <physiologicalReaction direction="left-to-right" evidence="10">
        <dbReference type="Rhea" id="RHEA:45657"/>
    </physiologicalReaction>
</comment>
<comment type="catalytic activity">
    <reaction evidence="5">
        <text>1-octadecanoyl-2-(9Z-octadecenoyl)-sn-glycero-3-phosphate + CTP + H(+) = 1-octadecanoyl-2-(9Z-octadecenoyl)-sn-glycero-3-cytidine-5'-diphosphate + diphosphate</text>
        <dbReference type="Rhea" id="RHEA:45664"/>
        <dbReference type="ChEBI" id="CHEBI:15378"/>
        <dbReference type="ChEBI" id="CHEBI:33019"/>
        <dbReference type="ChEBI" id="CHEBI:37563"/>
        <dbReference type="ChEBI" id="CHEBI:74560"/>
        <dbReference type="ChEBI" id="CHEBI:85353"/>
    </reaction>
    <physiologicalReaction direction="left-to-right" evidence="10">
        <dbReference type="Rhea" id="RHEA:45665"/>
    </physiologicalReaction>
</comment>
<comment type="catalytic activity">
    <reaction evidence="5">
        <text>1-octadecanoyl-2-(4Z,7Z,10Z,13Z,16Z,19Z-docosahexaenoyl)-sn-glycero-3-phosphate + CTP + H(+) = 1-octadecanoyl-2-(4Z,7Z,10Z,13Z,16Z,19Z-docosahexaenoyl)-sn-glycero-3-cytidine-5'-diphosphate + diphosphate</text>
        <dbReference type="Rhea" id="RHEA:45668"/>
        <dbReference type="ChEBI" id="CHEBI:15378"/>
        <dbReference type="ChEBI" id="CHEBI:33019"/>
        <dbReference type="ChEBI" id="CHEBI:37563"/>
        <dbReference type="ChEBI" id="CHEBI:77130"/>
        <dbReference type="ChEBI" id="CHEBI:85354"/>
    </reaction>
    <physiologicalReaction direction="left-to-right" evidence="10">
        <dbReference type="Rhea" id="RHEA:45669"/>
    </physiologicalReaction>
</comment>
<comment type="catalytic activity">
    <reaction evidence="5">
        <text>1,2-di-(9Z,12Z-octadecadienoyl)-sn-glycero-3-phosphate + CTP + H(+) = 1,2-di-(9Z,12Z-octadecadienoyl)-sn-glycero-3-cytidine-5'-diphosphate + diphosphate</text>
        <dbReference type="Rhea" id="RHEA:45672"/>
        <dbReference type="ChEBI" id="CHEBI:15378"/>
        <dbReference type="ChEBI" id="CHEBI:33019"/>
        <dbReference type="ChEBI" id="CHEBI:37563"/>
        <dbReference type="ChEBI" id="CHEBI:77128"/>
        <dbReference type="ChEBI" id="CHEBI:85355"/>
    </reaction>
    <physiologicalReaction direction="left-to-right" evidence="10">
        <dbReference type="Rhea" id="RHEA:45673"/>
    </physiologicalReaction>
</comment>
<comment type="catalytic activity">
    <reaction evidence="5">
        <text>1,2-di-(9Z-octadecenoyl)-sn-glycero-3-phosphate + CTP + H(+) = 1,2-di-(9Z-octadecenoyl)-sn-glycero-3-cytidine-5'-diphosphate + diphosphate</text>
        <dbReference type="Rhea" id="RHEA:45676"/>
        <dbReference type="ChEBI" id="CHEBI:15378"/>
        <dbReference type="ChEBI" id="CHEBI:33019"/>
        <dbReference type="ChEBI" id="CHEBI:37563"/>
        <dbReference type="ChEBI" id="CHEBI:74546"/>
        <dbReference type="ChEBI" id="CHEBI:85356"/>
    </reaction>
    <physiologicalReaction direction="left-to-right" evidence="10">
        <dbReference type="Rhea" id="RHEA:45677"/>
    </physiologicalReaction>
</comment>
<comment type="activity regulation">
    <text evidence="5">Inhibited by its anionic phospholipid end products, with phosphatidylinositol-(4,5)- bisphosphate (PIP2) showing the strongest inhibition. Inhibition is also acyl chain specific, with 1-stearoyl-2-arachidonoyl-snphosphatidylinositol showing the strongest inhibition.</text>
</comment>
<comment type="biophysicochemical properties">
    <kinetics>
        <KM evidence="5">1.4 uM for 1-stearoyl-2-arachidonoyl-sn-phosphatidic acid</KM>
        <KM evidence="5">0.9 uM for 1-stearoyl-2-linoleoyl-sn-phosphatidic acid</KM>
        <Vmax evidence="5">9.3 umol/min/mg enzyme for 1-stearoyl-2-arachidonoyl-sn-phosphatidic acid</Vmax>
        <Vmax evidence="5">3.5 umol/min/mg enzyme for 1-stearoyl-2-linoleoyl-sn-phosphatidic acid</Vmax>
    </kinetics>
</comment>
<comment type="pathway">
    <text>Phospholipid metabolism; CDP-diacylglycerol biosynthesis; CDP-diacylglycerol from sn-glycerol 3-phosphate: step 3/3.</text>
</comment>
<comment type="subunit">
    <text evidence="1">Homodimer.</text>
</comment>
<comment type="interaction">
    <interactant intactId="EBI-3913685">
        <id>O95674</id>
    </interactant>
    <interactant intactId="EBI-21535880">
        <id>Q92870-2</id>
        <label>APBB2</label>
    </interactant>
    <organismsDiffer>false</organismsDiffer>
    <experiments>3</experiments>
</comment>
<comment type="interaction">
    <interactant intactId="EBI-3913685">
        <id>O95674</id>
    </interactant>
    <interactant intactId="EBI-718729">
        <id>P55212</id>
        <label>CASP6</label>
    </interactant>
    <organismsDiffer>false</organismsDiffer>
    <experiments>3</experiments>
</comment>
<comment type="interaction">
    <interactant intactId="EBI-3913685">
        <id>O95674</id>
    </interactant>
    <interactant intactId="EBI-25837549">
        <id>P28329-3</id>
        <label>CHAT</label>
    </interactant>
    <organismsDiffer>false</organismsDiffer>
    <experiments>3</experiments>
</comment>
<comment type="interaction">
    <interactant intactId="EBI-3913685">
        <id>O95674</id>
    </interactant>
    <interactant intactId="EBI-18013275">
        <id>Q7Z7G2</id>
        <label>CPLX4</label>
    </interactant>
    <organismsDiffer>false</organismsDiffer>
    <experiments>3</experiments>
</comment>
<comment type="interaction">
    <interactant intactId="EBI-3913685">
        <id>O95674</id>
    </interactant>
    <interactant intactId="EBI-10976677">
        <id>G5E9A7</id>
        <label>DMWD</label>
    </interactant>
    <organismsDiffer>false</organismsDiffer>
    <experiments>3</experiments>
</comment>
<comment type="interaction">
    <interactant intactId="EBI-3913685">
        <id>O95674</id>
    </interactant>
    <interactant intactId="EBI-781551">
        <id>Q9Y282</id>
        <label>ERGIC3</label>
    </interactant>
    <organismsDiffer>false</organismsDiffer>
    <experiments>3</experiments>
</comment>
<comment type="interaction">
    <interactant intactId="EBI-3913685">
        <id>O95674</id>
    </interactant>
    <interactant intactId="EBI-18304435">
        <id>Q5JX71</id>
        <label>FAM209A</label>
    </interactant>
    <organismsDiffer>false</organismsDiffer>
    <experiments>3</experiments>
</comment>
<comment type="interaction">
    <interactant intactId="EBI-3913685">
        <id>O95674</id>
    </interactant>
    <interactant intactId="EBI-348399">
        <id>P22607</id>
        <label>FGFR3</label>
    </interactant>
    <organismsDiffer>false</organismsDiffer>
    <experiments>4</experiments>
</comment>
<comment type="interaction">
    <interactant intactId="EBI-3913685">
        <id>O95674</id>
    </interactant>
    <interactant intactId="EBI-13345167">
        <id>Q8TDT2</id>
        <label>GPR152</label>
    </interactant>
    <organismsDiffer>false</organismsDiffer>
    <experiments>3</experiments>
</comment>
<comment type="interaction">
    <interactant intactId="EBI-3913685">
        <id>O95674</id>
    </interactant>
    <interactant intactId="EBI-11721746">
        <id>Q8TED1</id>
        <label>GPX8</label>
    </interactant>
    <organismsDiffer>false</organismsDiffer>
    <experiments>3</experiments>
</comment>
<comment type="interaction">
    <interactant intactId="EBI-3913685">
        <id>O95674</id>
    </interactant>
    <interactant intactId="EBI-8285963">
        <id>Q14957</id>
        <label>GRIN2C</label>
    </interactant>
    <organismsDiffer>false</organismsDiffer>
    <experiments>3</experiments>
</comment>
<comment type="interaction">
    <interactant intactId="EBI-3913685">
        <id>O95674</id>
    </interactant>
    <interactant intactId="EBI-351506">
        <id>P06396</id>
        <label>GSN</label>
    </interactant>
    <organismsDiffer>false</organismsDiffer>
    <experiments>3</experiments>
</comment>
<comment type="interaction">
    <interactant intactId="EBI-3913685">
        <id>O95674</id>
    </interactant>
    <interactant intactId="EBI-11427100">
        <id>P31937</id>
        <label>HIBADH</label>
    </interactant>
    <organismsDiffer>false</organismsDiffer>
    <experiments>3</experiments>
</comment>
<comment type="interaction">
    <interactant intactId="EBI-3913685">
        <id>O95674</id>
    </interactant>
    <interactant intactId="EBI-350145">
        <id>P01112</id>
        <label>HRAS</label>
    </interactant>
    <organismsDiffer>false</organismsDiffer>
    <experiments>3</experiments>
</comment>
<comment type="interaction">
    <interactant intactId="EBI-3913685">
        <id>O95674</id>
    </interactant>
    <interactant intactId="EBI-466029">
        <id>P42858</id>
        <label>HTT</label>
    </interactant>
    <organismsDiffer>false</organismsDiffer>
    <experiments>9</experiments>
</comment>
<comment type="interaction">
    <interactant intactId="EBI-3913685">
        <id>O95674</id>
    </interactant>
    <interactant intactId="EBI-1031656">
        <id>Q13651</id>
        <label>IL10RA</label>
    </interactant>
    <organismsDiffer>false</organismsDiffer>
    <experiments>3</experiments>
</comment>
<comment type="interaction">
    <interactant intactId="EBI-3913685">
        <id>O95674</id>
    </interactant>
    <interactant intactId="EBI-11305455">
        <id>Q96MG2</id>
        <label>JSRP1</label>
    </interactant>
    <organismsDiffer>false</organismsDiffer>
    <experiments>3</experiments>
</comment>
<comment type="interaction">
    <interactant intactId="EBI-3913685">
        <id>O95674</id>
    </interactant>
    <interactant intactId="EBI-21591415">
        <id>P13473-2</id>
        <label>LAMP2</label>
    </interactant>
    <organismsDiffer>false</organismsDiffer>
    <experiments>3</experiments>
</comment>
<comment type="interaction">
    <interactant intactId="EBI-3913685">
        <id>O95674</id>
    </interactant>
    <interactant intactId="EBI-17490413">
        <id>A8MZ59</id>
        <label>LEUTX</label>
    </interactant>
    <organismsDiffer>false</organismsDiffer>
    <experiments>3</experiments>
</comment>
<comment type="interaction">
    <interactant intactId="EBI-3913685">
        <id>O95674</id>
    </interactant>
    <interactant intactId="EBI-2820517">
        <id>Q8TAF8</id>
        <label>LHFPL5</label>
    </interactant>
    <organismsDiffer>false</organismsDiffer>
    <experiments>3</experiments>
</comment>
<comment type="interaction">
    <interactant intactId="EBI-3913685">
        <id>O95674</id>
    </interactant>
    <interactant intactId="EBI-12201447">
        <id>Q95460-2</id>
        <label>MR1</label>
    </interactant>
    <organismsDiffer>false</organismsDiffer>
    <experiments>3</experiments>
</comment>
<comment type="interaction">
    <interactant intactId="EBI-3913685">
        <id>O95674</id>
    </interactant>
    <interactant intactId="EBI-3923617">
        <id>Q9H2K0</id>
        <label>MTIF3</label>
    </interactant>
    <organismsDiffer>false</organismsDiffer>
    <experiments>3</experiments>
</comment>
<comment type="interaction">
    <interactant intactId="EBI-3913685">
        <id>O95674</id>
    </interactant>
    <interactant intactId="EBI-709754">
        <id>Q9HB07</id>
        <label>MYG1</label>
    </interactant>
    <organismsDiffer>false</organismsDiffer>
    <experiments>3</experiments>
</comment>
<comment type="interaction">
    <interactant intactId="EBI-3913685">
        <id>O95674</id>
    </interactant>
    <interactant intactId="EBI-5280197">
        <id>O75400-2</id>
        <label>PRPF40A</label>
    </interactant>
    <organismsDiffer>false</organismsDiffer>
    <experiments>3</experiments>
</comment>
<comment type="interaction">
    <interactant intactId="EBI-3913685">
        <id>O95674</id>
    </interactant>
    <interactant intactId="EBI-286642">
        <id>P62826</id>
        <label>RAN</label>
    </interactant>
    <organismsDiffer>false</organismsDiffer>
    <experiments>3</experiments>
</comment>
<comment type="interaction">
    <interactant intactId="EBI-3913685">
        <id>O95674</id>
    </interactant>
    <interactant intactId="EBI-2129998">
        <id>Q9H9V4</id>
        <label>RNF122</label>
    </interactant>
    <organismsDiffer>false</organismsDiffer>
    <experiments>3</experiments>
</comment>
<comment type="interaction">
    <interactant intactId="EBI-3913685">
        <id>O95674</id>
    </interactant>
    <interactant intactId="EBI-5235340">
        <id>Q7Z699</id>
        <label>SPRED1</label>
    </interactant>
    <organismsDiffer>false</organismsDiffer>
    <experiments>3</experiments>
</comment>
<comment type="interaction">
    <interactant intactId="EBI-3913685">
        <id>O95674</id>
    </interactant>
    <interactant intactId="EBI-17280858">
        <id>Q8WWF3</id>
        <label>SSMEM1</label>
    </interactant>
    <organismsDiffer>false</organismsDiffer>
    <experiments>3</experiments>
</comment>
<comment type="interaction">
    <interactant intactId="EBI-3913685">
        <id>O95674</id>
    </interactant>
    <interactant intactId="EBI-1054052">
        <id>P31948</id>
        <label>STIP1</label>
    </interactant>
    <organismsDiffer>false</organismsDiffer>
    <experiments>3</experiments>
</comment>
<comment type="interaction">
    <interactant intactId="EBI-3913685">
        <id>O95674</id>
    </interactant>
    <interactant intactId="EBI-6268651">
        <id>Q9NPL8</id>
        <label>TIMMDC1</label>
    </interactant>
    <organismsDiffer>false</organismsDiffer>
    <experiments>3</experiments>
</comment>
<comment type="interaction">
    <interactant intactId="EBI-3913685">
        <id>O95674</id>
    </interactant>
    <interactant intactId="EBI-7238458">
        <id>Q8IV31</id>
        <label>TMEM139</label>
    </interactant>
    <organismsDiffer>false</organismsDiffer>
    <experiments>3</experiments>
</comment>
<comment type="interaction">
    <interactant intactId="EBI-3913685">
        <id>O95674</id>
    </interactant>
    <interactant intactId="EBI-3923061">
        <id>Q96B21</id>
        <label>TMEM45B</label>
    </interactant>
    <organismsDiffer>false</organismsDiffer>
    <experiments>3</experiments>
</comment>
<comment type="interaction">
    <interactant intactId="EBI-3913685">
        <id>O95674</id>
    </interactant>
    <interactant intactId="EBI-6447886">
        <id>Q9Y320</id>
        <label>TMX2</label>
    </interactant>
    <organismsDiffer>false</organismsDiffer>
    <experiments>3</experiments>
</comment>
<comment type="interaction">
    <interactant intactId="EBI-3913685">
        <id>O95674</id>
    </interactant>
    <interactant intactId="EBI-12806590">
        <id>Q86WV8</id>
        <label>TSC1</label>
    </interactant>
    <organismsDiffer>false</organismsDiffer>
    <experiments>3</experiments>
</comment>
<comment type="interaction">
    <interactant intactId="EBI-3913685">
        <id>O95674</id>
    </interactant>
    <interactant intactId="EBI-2466403">
        <id>O95859</id>
        <label>TSPAN12</label>
    </interactant>
    <organismsDiffer>false</organismsDiffer>
    <experiments>3</experiments>
</comment>
<comment type="interaction">
    <interactant intactId="EBI-3913685">
        <id>O95674</id>
    </interactant>
    <interactant intactId="EBI-741480">
        <id>Q9UMX0</id>
        <label>UBQLN1</label>
    </interactant>
    <organismsDiffer>false</organismsDiffer>
    <experiments>3</experiments>
</comment>
<comment type="interaction">
    <interactant intactId="EBI-3913685">
        <id>O95674</id>
    </interactant>
    <interactant intactId="EBI-25900580">
        <id>Q9Y649</id>
    </interactant>
    <organismsDiffer>false</organismsDiffer>
    <experiments>3</experiments>
</comment>
<comment type="subcellular location">
    <subcellularLocation>
        <location evidence="5 6 7">Endoplasmic reticulum membrane</location>
        <topology evidence="3">Multi-pass membrane protein</topology>
    </subcellularLocation>
</comment>
<comment type="alternative products">
    <event type="alternative splicing"/>
    <isoform>
        <id>O95674-1</id>
        <name>1</name>
        <sequence type="displayed"/>
    </isoform>
    <isoform>
        <id>O95674-2</id>
        <name>2</name>
        <sequence type="described" ref="VSP_015477 VSP_015480 VSP_015482"/>
    </isoform>
</comment>
<comment type="tissue specificity">
    <text evidence="8">Widely expressed. Expressed in heart, brain and retina, and to a lesser extent in placenta, lung, liver, skeletal muscle, kidney and pancreas.</text>
</comment>
<comment type="developmental stage">
    <text evidence="8">No expression detected at 10.5 dpc in the developing brain. At 12.5 dpc, expression is detected in the developing sentral nervous system and peripheral nervous system. At 17.5 dpc, high levels of expression are detected in a number of sites, including the dorsal root ganglia of the peripheral nervous system and the ganglion cell layer of the neural retina in the developing eye. At this stage, expression in the brain is restricted to the ventricular zone of the telencephalon, in particular in the basal ganglia and the cerebral cortex.</text>
</comment>
<comment type="similarity">
    <text evidence="9">Belongs to the CDS family.</text>
</comment>
<protein>
    <recommendedName>
        <fullName evidence="9">Phosphatidate cytidylyltransferase 2</fullName>
        <ecNumber evidence="5">2.7.7.41</ecNumber>
    </recommendedName>
    <alternativeName>
        <fullName>CDP-DAG synthase 2</fullName>
    </alternativeName>
    <alternativeName>
        <fullName>CDP-DG synthase 2</fullName>
    </alternativeName>
    <alternativeName>
        <fullName>CDP-diacylglycerol synthase 2</fullName>
        <shortName>CDS 2</shortName>
    </alternativeName>
    <alternativeName>
        <fullName>CDP-diglyceride pyrophosphorylase 2</fullName>
    </alternativeName>
    <alternativeName>
        <fullName>CDP-diglyceride synthase 2</fullName>
    </alternativeName>
    <alternativeName>
        <fullName>CTP:phosphatidate cytidylyltransferase 2</fullName>
    </alternativeName>
</protein>
<name>CDS2_HUMAN</name>
<accession>O95674</accession>
<accession>B2RDC6</accession>
<accession>D3DW04</accession>
<accession>Q5TDY2</accession>
<accession>Q5TDY3</accession>
<accession>Q5TDY4</accession>
<accession>Q5TDY5</accession>
<accession>Q9BYK5</accession>
<accession>Q9NTT2</accession>
<gene>
    <name evidence="11" type="primary">CDS2</name>
</gene>